<name>GLNE_CORGL</name>
<sequence length="1045" mass="116395">MSGPLRSERKVVGFVRDPLPKVGSLSLKSEHAQADLEHLGWRNVESLDLLWGLSGAGDPDVALNLLIRLYQALEAIGEDARNELDQEIRQDEKLRVRLFALLGGSSAVGDHLVANPLQWKLLKLDAPSREEMFQALLESVKAQPAVLEVEDFSDAHNIARDDLSTPGFYTASVTGPEAERVLKWTYRTLLTRIAAHDLAGTYPTDMRRKGGDPVPFSTVTMQLSDLADAALTAALAVAIANVYGEKPVDSALSVIAMGKCGAQELNYISDVDVVFVAEPANSKSTRTAAELIRIGSNSFFEVDAALRPEGKSGALVRSLDSHMAYYKRWAETWEFQALLKARPMTGDINLGQSYVDALSPLIWTASQRESFVTDVQAMRRRVLDNVPEDLRDRELKLGRGGLRDVEFAVQLLQMVHGRIDETLRVRSTVNALHVLVDQGYVGREDGHNLIESYEFLRLLEHRLQLERIKRTHLLPKPDDRMNMRWLARASGFTGSMEQSSAKAMERHLRKVRLQIQSLHSQLFYRPLLNSVVNLSADAIRLSPDAAKLQLAALGYLHPSRAYEHLTALASGASRKAKIQAMLLPTLMEWLSQTAEPDAGLLNYRKLSDASYDRSWFLRMLRDEGVVGQRLMRILGNSPYISELIISTPDFMKQLGDAASGPKLLATAPTQVVKAIKATVSRHESPDRAIQAARSLRRQELARIASADLLNMLTVQEVCQSLSLVWDAVLDAALDAEIRAALNDPQKPDQPLANISVIGMGRLGGAELGYGSDADVMFVCEPVAGVEEHEAVTWSIAICDSMRSRLAQPSGDPPLEVDLGLRPEGRSGAIVRTVDSYVKYYEKWGETWEIQALLRAAWVAGDRELGIKFLESIDRFRYPVDGATQAQLREVRRIKARVDNERLPRGADRNTHTKLGRGALTDIEWTVQLLTMMHAHEIPELHNTSTLEVLEVLEKHQIINPVQVQTLREAWLTATAARNALVLVRGKRLDQLPTPGPHLAQVAGASGWDPNEYQEYLENYLKVTRKSRQVVDEVFWGVDSMEQREF</sequence>
<organism>
    <name type="scientific">Corynebacterium glutamicum (strain ATCC 13032 / DSM 20300 / JCM 1318 / BCRC 11384 / CCUG 27702 / LMG 3730 / NBRC 12168 / NCIMB 10025 / NRRL B-2784 / 534)</name>
    <dbReference type="NCBI Taxonomy" id="196627"/>
    <lineage>
        <taxon>Bacteria</taxon>
        <taxon>Bacillati</taxon>
        <taxon>Actinomycetota</taxon>
        <taxon>Actinomycetes</taxon>
        <taxon>Mycobacteriales</taxon>
        <taxon>Corynebacteriaceae</taxon>
        <taxon>Corynebacterium</taxon>
    </lineage>
</organism>
<keyword id="KW-0067">ATP-binding</keyword>
<keyword id="KW-0460">Magnesium</keyword>
<keyword id="KW-0511">Multifunctional enzyme</keyword>
<keyword id="KW-0547">Nucleotide-binding</keyword>
<keyword id="KW-0548">Nucleotidyltransferase</keyword>
<keyword id="KW-1185">Reference proteome</keyword>
<keyword id="KW-0808">Transferase</keyword>
<proteinExistence type="inferred from homology"/>
<reference key="1">
    <citation type="journal article" date="2003" name="Appl. Microbiol. Biotechnol.">
        <title>The Corynebacterium glutamicum genome: features and impacts on biotechnological processes.</title>
        <authorList>
            <person name="Ikeda M."/>
            <person name="Nakagawa S."/>
        </authorList>
    </citation>
    <scope>NUCLEOTIDE SEQUENCE [LARGE SCALE GENOMIC DNA]</scope>
    <source>
        <strain>ATCC 13032 / DSM 20300 / JCM 1318 / BCRC 11384 / CCUG 27702 / LMG 3730 / NBRC 12168 / NCIMB 10025 / NRRL B-2784 / 534</strain>
    </source>
</reference>
<reference key="2">
    <citation type="journal article" date="2003" name="J. Biotechnol.">
        <title>The complete Corynebacterium glutamicum ATCC 13032 genome sequence and its impact on the production of L-aspartate-derived amino acids and vitamins.</title>
        <authorList>
            <person name="Kalinowski J."/>
            <person name="Bathe B."/>
            <person name="Bartels D."/>
            <person name="Bischoff N."/>
            <person name="Bott M."/>
            <person name="Burkovski A."/>
            <person name="Dusch N."/>
            <person name="Eggeling L."/>
            <person name="Eikmanns B.J."/>
            <person name="Gaigalat L."/>
            <person name="Goesmann A."/>
            <person name="Hartmann M."/>
            <person name="Huthmacher K."/>
            <person name="Kraemer R."/>
            <person name="Linke B."/>
            <person name="McHardy A.C."/>
            <person name="Meyer F."/>
            <person name="Moeckel B."/>
            <person name="Pfefferle W."/>
            <person name="Puehler A."/>
            <person name="Rey D.A."/>
            <person name="Rueckert C."/>
            <person name="Rupp O."/>
            <person name="Sahm H."/>
            <person name="Wendisch V.F."/>
            <person name="Wiegraebe I."/>
            <person name="Tauch A."/>
        </authorList>
    </citation>
    <scope>NUCLEOTIDE SEQUENCE [LARGE SCALE GENOMIC DNA]</scope>
    <source>
        <strain>ATCC 13032 / DSM 20300 / JCM 1318 / BCRC 11384 / CCUG 27702 / LMG 3730 / NBRC 12168 / NCIMB 10025 / NRRL B-2784 / 534</strain>
    </source>
</reference>
<reference key="3">
    <citation type="journal article" date="2001" name="FEMS Microbiol. Lett.">
        <title>Glutamine synthetases of Corynebacterium glutamicum: transcriptional control and regulation of activity.</title>
        <authorList>
            <person name="Nolden L."/>
            <person name="Farwick M."/>
            <person name="Kraemer R."/>
            <person name="Burkovski A."/>
        </authorList>
    </citation>
    <scope>NUCLEOTIDE SEQUENCE [GENOMIC DNA]</scope>
    <source>
        <strain>ATCC 13032 / DSM 20300 / JCM 1318 / BCRC 11384 / CCUG 27702 / LMG 3730 / NBRC 12168 / NCIMB 10025 / NRRL B-2784 / 534</strain>
    </source>
</reference>
<comment type="function">
    <text evidence="1">Involved in the regulation of glutamine synthetase GlnA, a key enzyme in the process to assimilate ammonia. When cellular nitrogen levels are high, the C-terminal adenylyl transferase (AT) inactivates GlnA by covalent transfer of an adenylyl group from ATP to specific tyrosine residue of GlnA, thus reducing its activity. Conversely, when nitrogen levels are low, the N-terminal adenylyl removase (AR) activates GlnA by removing the adenylyl group by phosphorolysis, increasing its activity. The regulatory region of GlnE binds the signal transduction protein PII (GlnB) which indicates the nitrogen status of the cell.</text>
</comment>
<comment type="catalytic activity">
    <reaction evidence="1">
        <text>[glutamine synthetase]-O(4)-(5'-adenylyl)-L-tyrosine + phosphate = [glutamine synthetase]-L-tyrosine + ADP</text>
        <dbReference type="Rhea" id="RHEA:43716"/>
        <dbReference type="Rhea" id="RHEA-COMP:10660"/>
        <dbReference type="Rhea" id="RHEA-COMP:10661"/>
        <dbReference type="ChEBI" id="CHEBI:43474"/>
        <dbReference type="ChEBI" id="CHEBI:46858"/>
        <dbReference type="ChEBI" id="CHEBI:83624"/>
        <dbReference type="ChEBI" id="CHEBI:456216"/>
        <dbReference type="EC" id="2.7.7.89"/>
    </reaction>
</comment>
<comment type="catalytic activity">
    <reaction evidence="1">
        <text>[glutamine synthetase]-L-tyrosine + ATP = [glutamine synthetase]-O(4)-(5'-adenylyl)-L-tyrosine + diphosphate</text>
        <dbReference type="Rhea" id="RHEA:18589"/>
        <dbReference type="Rhea" id="RHEA-COMP:10660"/>
        <dbReference type="Rhea" id="RHEA-COMP:10661"/>
        <dbReference type="ChEBI" id="CHEBI:30616"/>
        <dbReference type="ChEBI" id="CHEBI:33019"/>
        <dbReference type="ChEBI" id="CHEBI:46858"/>
        <dbReference type="ChEBI" id="CHEBI:83624"/>
        <dbReference type="EC" id="2.7.7.42"/>
    </reaction>
</comment>
<comment type="cofactor">
    <cofactor evidence="1">
        <name>Mg(2+)</name>
        <dbReference type="ChEBI" id="CHEBI:18420"/>
    </cofactor>
</comment>
<comment type="similarity">
    <text evidence="1">Belongs to the GlnE family.</text>
</comment>
<evidence type="ECO:0000255" key="1">
    <source>
        <dbReference type="HAMAP-Rule" id="MF_00802"/>
    </source>
</evidence>
<dbReference type="EC" id="2.7.7.89" evidence="1"/>
<dbReference type="EC" id="2.7.7.42" evidence="1"/>
<dbReference type="EMBL" id="BA000036">
    <property type="protein sequence ID" value="BAB99621.1"/>
    <property type="molecule type" value="Genomic_DNA"/>
</dbReference>
<dbReference type="EMBL" id="BX927154">
    <property type="protein sequence ID" value="CAF20569.1"/>
    <property type="molecule type" value="Genomic_DNA"/>
</dbReference>
<dbReference type="EMBL" id="AJ310086">
    <property type="protein sequence ID" value="CAC34379.1"/>
    <property type="molecule type" value="Genomic_DNA"/>
</dbReference>
<dbReference type="RefSeq" id="NP_601431.1">
    <property type="nucleotide sequence ID" value="NC_003450.3"/>
</dbReference>
<dbReference type="RefSeq" id="WP_011014971.1">
    <property type="nucleotide sequence ID" value="NC_006958.1"/>
</dbReference>
<dbReference type="SMR" id="Q79VE2"/>
<dbReference type="STRING" id="196627.cg2446"/>
<dbReference type="KEGG" id="cgb:cg2446"/>
<dbReference type="KEGG" id="cgl:Cgl2228"/>
<dbReference type="PATRIC" id="fig|196627.13.peg.2165"/>
<dbReference type="eggNOG" id="COG1391">
    <property type="taxonomic scope" value="Bacteria"/>
</dbReference>
<dbReference type="HOGENOM" id="CLU_006233_1_0_11"/>
<dbReference type="OrthoDB" id="9759366at2"/>
<dbReference type="BioCyc" id="CORYNE:G18NG-11820-MONOMER"/>
<dbReference type="BRENDA" id="2.7.7.42">
    <property type="organism ID" value="960"/>
</dbReference>
<dbReference type="Proteomes" id="UP000000582">
    <property type="component" value="Chromosome"/>
</dbReference>
<dbReference type="Proteomes" id="UP000001009">
    <property type="component" value="Chromosome"/>
</dbReference>
<dbReference type="GO" id="GO:0005829">
    <property type="term" value="C:cytosol"/>
    <property type="evidence" value="ECO:0007669"/>
    <property type="project" value="TreeGrafter"/>
</dbReference>
<dbReference type="GO" id="GO:0008882">
    <property type="term" value="F:[glutamate-ammonia-ligase] adenylyltransferase activity"/>
    <property type="evidence" value="ECO:0007669"/>
    <property type="project" value="UniProtKB-UniRule"/>
</dbReference>
<dbReference type="GO" id="GO:0047388">
    <property type="term" value="F:[glutamine synthetase]-adenylyl-L-tyrosine phosphorylase activity"/>
    <property type="evidence" value="ECO:0007669"/>
    <property type="project" value="UniProtKB-EC"/>
</dbReference>
<dbReference type="GO" id="GO:0005524">
    <property type="term" value="F:ATP binding"/>
    <property type="evidence" value="ECO:0007669"/>
    <property type="project" value="UniProtKB-UniRule"/>
</dbReference>
<dbReference type="GO" id="GO:0000287">
    <property type="term" value="F:magnesium ion binding"/>
    <property type="evidence" value="ECO:0007669"/>
    <property type="project" value="UniProtKB-UniRule"/>
</dbReference>
<dbReference type="GO" id="GO:0000820">
    <property type="term" value="P:regulation of glutamine family amino acid metabolic process"/>
    <property type="evidence" value="ECO:0007669"/>
    <property type="project" value="UniProtKB-UniRule"/>
</dbReference>
<dbReference type="CDD" id="cd05401">
    <property type="entry name" value="NT_GlnE_GlnD_like"/>
    <property type="match status" value="2"/>
</dbReference>
<dbReference type="Gene3D" id="3.30.460.10">
    <property type="entry name" value="Beta Polymerase, domain 2"/>
    <property type="match status" value="2"/>
</dbReference>
<dbReference type="Gene3D" id="1.20.120.330">
    <property type="entry name" value="Nucleotidyltransferases domain 2"/>
    <property type="match status" value="2"/>
</dbReference>
<dbReference type="HAMAP" id="MF_00802">
    <property type="entry name" value="GlnE"/>
    <property type="match status" value="1"/>
</dbReference>
<dbReference type="InterPro" id="IPR023057">
    <property type="entry name" value="GlnE"/>
</dbReference>
<dbReference type="InterPro" id="IPR005190">
    <property type="entry name" value="GlnE_rpt_dom"/>
</dbReference>
<dbReference type="InterPro" id="IPR043519">
    <property type="entry name" value="NT_sf"/>
</dbReference>
<dbReference type="InterPro" id="IPR013546">
    <property type="entry name" value="PII_UdlTrfase/GS_AdlTrfase"/>
</dbReference>
<dbReference type="NCBIfam" id="NF010707">
    <property type="entry name" value="PRK14109.1"/>
    <property type="match status" value="1"/>
</dbReference>
<dbReference type="PANTHER" id="PTHR30621:SF0">
    <property type="entry name" value="BIFUNCTIONAL GLUTAMINE SYNTHETASE ADENYLYLTRANSFERASE_ADENYLYL-REMOVING ENZYME"/>
    <property type="match status" value="1"/>
</dbReference>
<dbReference type="PANTHER" id="PTHR30621">
    <property type="entry name" value="GLUTAMINE SYNTHETASE ADENYLYLTRANSFERASE"/>
    <property type="match status" value="1"/>
</dbReference>
<dbReference type="Pfam" id="PF08335">
    <property type="entry name" value="GlnD_UR_UTase"/>
    <property type="match status" value="2"/>
</dbReference>
<dbReference type="Pfam" id="PF03710">
    <property type="entry name" value="GlnE"/>
    <property type="match status" value="2"/>
</dbReference>
<dbReference type="SUPFAM" id="SSF81301">
    <property type="entry name" value="Nucleotidyltransferase"/>
    <property type="match status" value="2"/>
</dbReference>
<dbReference type="SUPFAM" id="SSF81593">
    <property type="entry name" value="Nucleotidyltransferase substrate binding subunit/domain"/>
    <property type="match status" value="2"/>
</dbReference>
<gene>
    <name evidence="1" type="primary">glnE</name>
    <name type="ordered locus">Cgl2228</name>
    <name type="ordered locus">cg2446</name>
</gene>
<accession>Q79VE2</accession>
<accession>Q9AEL3</accession>
<feature type="chain" id="PRO_0000209243" description="Bifunctional glutamine synthetase adenylyltransferase/adenylyl-removing enzyme">
    <location>
        <begin position="1"/>
        <end position="1045"/>
    </location>
</feature>
<feature type="region of interest" description="Adenylyl removase" evidence="1">
    <location>
        <begin position="1"/>
        <end position="527"/>
    </location>
</feature>
<feature type="region of interest" description="Adenylyl transferase" evidence="1">
    <location>
        <begin position="533"/>
        <end position="1045"/>
    </location>
</feature>
<protein>
    <recommendedName>
        <fullName evidence="1">Bifunctional glutamine synthetase adenylyltransferase/adenylyl-removing enzyme</fullName>
    </recommendedName>
    <alternativeName>
        <fullName evidence="1">ATP:glutamine synthetase adenylyltransferase</fullName>
    </alternativeName>
    <alternativeName>
        <fullName evidence="1">ATase</fullName>
    </alternativeName>
    <domain>
        <recommendedName>
            <fullName evidence="1">Glutamine synthetase adenylyl-L-tyrosine phosphorylase</fullName>
            <ecNumber evidence="1">2.7.7.89</ecNumber>
        </recommendedName>
        <alternativeName>
            <fullName evidence="1">Adenylyl removase</fullName>
            <shortName evidence="1">AR</shortName>
            <shortName evidence="1">AT-N</shortName>
        </alternativeName>
    </domain>
    <domain>
        <recommendedName>
            <fullName evidence="1">Glutamine synthetase adenylyl transferase</fullName>
            <ecNumber evidence="1">2.7.7.42</ecNumber>
        </recommendedName>
        <alternativeName>
            <fullName evidence="1">Adenylyl transferase</fullName>
            <shortName evidence="1">AT</shortName>
            <shortName evidence="1">AT-C</shortName>
        </alternativeName>
    </domain>
</protein>